<name>RS13_PORG3</name>
<proteinExistence type="inferred from homology"/>
<reference key="1">
    <citation type="journal article" date="2008" name="DNA Res.">
        <title>Determination of the genome sequence of Porphyromonas gingivalis strain ATCC 33277 and genomic comparison with strain W83 revealed extensive genome rearrangements in P. gingivalis.</title>
        <authorList>
            <person name="Naito M."/>
            <person name="Hirakawa H."/>
            <person name="Yamashita A."/>
            <person name="Ohara N."/>
            <person name="Shoji M."/>
            <person name="Yukitake H."/>
            <person name="Nakayama K."/>
            <person name="Toh H."/>
            <person name="Yoshimura F."/>
            <person name="Kuhara S."/>
            <person name="Hattori M."/>
            <person name="Hayashi T."/>
            <person name="Nakayama K."/>
        </authorList>
    </citation>
    <scope>NUCLEOTIDE SEQUENCE [LARGE SCALE GENOMIC DNA]</scope>
    <source>
        <strain>ATCC 33277 / DSM 20709 / CIP 103683 / JCM 12257 / NCTC 11834 / 2561</strain>
    </source>
</reference>
<organism>
    <name type="scientific">Porphyromonas gingivalis (strain ATCC 33277 / DSM 20709 / CIP 103683 / JCM 12257 / NCTC 11834 / 2561)</name>
    <dbReference type="NCBI Taxonomy" id="431947"/>
    <lineage>
        <taxon>Bacteria</taxon>
        <taxon>Pseudomonadati</taxon>
        <taxon>Bacteroidota</taxon>
        <taxon>Bacteroidia</taxon>
        <taxon>Bacteroidales</taxon>
        <taxon>Porphyromonadaceae</taxon>
        <taxon>Porphyromonas</taxon>
    </lineage>
</organism>
<protein>
    <recommendedName>
        <fullName evidence="1">Small ribosomal subunit protein uS13</fullName>
    </recommendedName>
    <alternativeName>
        <fullName evidence="3">30S ribosomal protein S13</fullName>
    </alternativeName>
</protein>
<gene>
    <name evidence="1" type="primary">rpsM</name>
    <name type="ordered locus">PGN_1844</name>
</gene>
<dbReference type="EMBL" id="AP009380">
    <property type="protein sequence ID" value="BAG34363.1"/>
    <property type="molecule type" value="Genomic_DNA"/>
</dbReference>
<dbReference type="RefSeq" id="WP_004583575.1">
    <property type="nucleotide sequence ID" value="NZ_CP025930.1"/>
</dbReference>
<dbReference type="SMR" id="B2RLW8"/>
<dbReference type="GeneID" id="57239572"/>
<dbReference type="KEGG" id="pgn:PGN_1844"/>
<dbReference type="eggNOG" id="COG0099">
    <property type="taxonomic scope" value="Bacteria"/>
</dbReference>
<dbReference type="HOGENOM" id="CLU_103849_1_2_10"/>
<dbReference type="OrthoDB" id="9803610at2"/>
<dbReference type="BioCyc" id="PGIN431947:G1G2V-2058-MONOMER"/>
<dbReference type="Proteomes" id="UP000008842">
    <property type="component" value="Chromosome"/>
</dbReference>
<dbReference type="GO" id="GO:0005829">
    <property type="term" value="C:cytosol"/>
    <property type="evidence" value="ECO:0007669"/>
    <property type="project" value="TreeGrafter"/>
</dbReference>
<dbReference type="GO" id="GO:0015935">
    <property type="term" value="C:small ribosomal subunit"/>
    <property type="evidence" value="ECO:0007669"/>
    <property type="project" value="TreeGrafter"/>
</dbReference>
<dbReference type="GO" id="GO:0019843">
    <property type="term" value="F:rRNA binding"/>
    <property type="evidence" value="ECO:0007669"/>
    <property type="project" value="UniProtKB-UniRule"/>
</dbReference>
<dbReference type="GO" id="GO:0003735">
    <property type="term" value="F:structural constituent of ribosome"/>
    <property type="evidence" value="ECO:0007669"/>
    <property type="project" value="InterPro"/>
</dbReference>
<dbReference type="GO" id="GO:0000049">
    <property type="term" value="F:tRNA binding"/>
    <property type="evidence" value="ECO:0007669"/>
    <property type="project" value="UniProtKB-UniRule"/>
</dbReference>
<dbReference type="GO" id="GO:0006412">
    <property type="term" value="P:translation"/>
    <property type="evidence" value="ECO:0007669"/>
    <property type="project" value="UniProtKB-UniRule"/>
</dbReference>
<dbReference type="FunFam" id="1.10.8.50:FF:000001">
    <property type="entry name" value="30S ribosomal protein S13"/>
    <property type="match status" value="1"/>
</dbReference>
<dbReference type="FunFam" id="4.10.910.10:FF:000001">
    <property type="entry name" value="30S ribosomal protein S13"/>
    <property type="match status" value="1"/>
</dbReference>
<dbReference type="Gene3D" id="1.10.8.50">
    <property type="match status" value="1"/>
</dbReference>
<dbReference type="Gene3D" id="4.10.910.10">
    <property type="entry name" value="30s ribosomal protein s13, domain 2"/>
    <property type="match status" value="1"/>
</dbReference>
<dbReference type="HAMAP" id="MF_01315">
    <property type="entry name" value="Ribosomal_uS13"/>
    <property type="match status" value="1"/>
</dbReference>
<dbReference type="InterPro" id="IPR027437">
    <property type="entry name" value="Rbsml_uS13_C"/>
</dbReference>
<dbReference type="InterPro" id="IPR001892">
    <property type="entry name" value="Ribosomal_uS13"/>
</dbReference>
<dbReference type="InterPro" id="IPR010979">
    <property type="entry name" value="Ribosomal_uS13-like_H2TH"/>
</dbReference>
<dbReference type="InterPro" id="IPR019980">
    <property type="entry name" value="Ribosomal_uS13_bac-type"/>
</dbReference>
<dbReference type="InterPro" id="IPR018269">
    <property type="entry name" value="Ribosomal_uS13_CS"/>
</dbReference>
<dbReference type="NCBIfam" id="TIGR03631">
    <property type="entry name" value="uS13_bact"/>
    <property type="match status" value="1"/>
</dbReference>
<dbReference type="PANTHER" id="PTHR10871">
    <property type="entry name" value="30S RIBOSOMAL PROTEIN S13/40S RIBOSOMAL PROTEIN S18"/>
    <property type="match status" value="1"/>
</dbReference>
<dbReference type="PANTHER" id="PTHR10871:SF1">
    <property type="entry name" value="SMALL RIBOSOMAL SUBUNIT PROTEIN US13M"/>
    <property type="match status" value="1"/>
</dbReference>
<dbReference type="Pfam" id="PF00416">
    <property type="entry name" value="Ribosomal_S13"/>
    <property type="match status" value="1"/>
</dbReference>
<dbReference type="PIRSF" id="PIRSF002134">
    <property type="entry name" value="Ribosomal_S13"/>
    <property type="match status" value="1"/>
</dbReference>
<dbReference type="SUPFAM" id="SSF46946">
    <property type="entry name" value="S13-like H2TH domain"/>
    <property type="match status" value="1"/>
</dbReference>
<dbReference type="PROSITE" id="PS00646">
    <property type="entry name" value="RIBOSOMAL_S13_1"/>
    <property type="match status" value="1"/>
</dbReference>
<dbReference type="PROSITE" id="PS50159">
    <property type="entry name" value="RIBOSOMAL_S13_2"/>
    <property type="match status" value="1"/>
</dbReference>
<accession>B2RLW8</accession>
<keyword id="KW-0687">Ribonucleoprotein</keyword>
<keyword id="KW-0689">Ribosomal protein</keyword>
<keyword id="KW-0694">RNA-binding</keyword>
<keyword id="KW-0699">rRNA-binding</keyword>
<keyword id="KW-0820">tRNA-binding</keyword>
<evidence type="ECO:0000255" key="1">
    <source>
        <dbReference type="HAMAP-Rule" id="MF_01315"/>
    </source>
</evidence>
<evidence type="ECO:0000256" key="2">
    <source>
        <dbReference type="SAM" id="MobiDB-lite"/>
    </source>
</evidence>
<evidence type="ECO:0000305" key="3"/>
<comment type="function">
    <text evidence="1">Located at the top of the head of the 30S subunit, it contacts several helices of the 16S rRNA. In the 70S ribosome it contacts the 23S rRNA (bridge B1a) and protein L5 of the 50S subunit (bridge B1b), connecting the 2 subunits; these bridges are implicated in subunit movement. Contacts the tRNAs in the A and P-sites.</text>
</comment>
<comment type="subunit">
    <text evidence="1">Part of the 30S ribosomal subunit. Forms a loose heterodimer with protein S19. Forms two bridges to the 50S subunit in the 70S ribosome.</text>
</comment>
<comment type="similarity">
    <text evidence="1">Belongs to the universal ribosomal protein uS13 family.</text>
</comment>
<feature type="chain" id="PRO_1000141300" description="Small ribosomal subunit protein uS13">
    <location>
        <begin position="1"/>
        <end position="126"/>
    </location>
</feature>
<feature type="region of interest" description="Disordered" evidence="2">
    <location>
        <begin position="99"/>
        <end position="126"/>
    </location>
</feature>
<feature type="compositionally biased region" description="Basic residues" evidence="2">
    <location>
        <begin position="108"/>
        <end position="126"/>
    </location>
</feature>
<sequence>MAIRIVGVDLPQNKRGFIALTYIYGIGRSSAITILDKAGVDRDIKVKDWSDDQAAAIRDVIGAGYKVEGDLRSEVQLNIKRLMDIGCYRGIRHRIGLPLRGQSTKNNARTRKGKKKTVANKKKATK</sequence>